<accession>P43126</accession>
<proteinExistence type="inferred from homology"/>
<evidence type="ECO:0000250" key="1"/>
<evidence type="ECO:0000255" key="2">
    <source>
        <dbReference type="PROSITE-ProRule" id="PRU00716"/>
    </source>
</evidence>
<evidence type="ECO:0000305" key="3"/>
<dbReference type="EC" id="1.5.1.-"/>
<dbReference type="EMBL" id="D17744">
    <property type="protein sequence ID" value="BAA04596.1"/>
    <property type="molecule type" value="Genomic_DNA"/>
</dbReference>
<dbReference type="RefSeq" id="WP_017018910.1">
    <property type="nucleotide sequence ID" value="NZ_WOAY01000009.1"/>
</dbReference>
<dbReference type="SMR" id="P43126"/>
<dbReference type="GO" id="GO:0016491">
    <property type="term" value="F:oxidoreductase activity"/>
    <property type="evidence" value="ECO:0007669"/>
    <property type="project" value="UniProtKB-KW"/>
</dbReference>
<dbReference type="GO" id="GO:0008218">
    <property type="term" value="P:bioluminescence"/>
    <property type="evidence" value="ECO:0007669"/>
    <property type="project" value="UniProtKB-KW"/>
</dbReference>
<dbReference type="CDD" id="cd06189">
    <property type="entry name" value="flavin_oxioreductase"/>
    <property type="match status" value="1"/>
</dbReference>
<dbReference type="Gene3D" id="3.40.50.80">
    <property type="entry name" value="Nucleotide-binding domain of ferredoxin-NADP reductase (FNR) module"/>
    <property type="match status" value="1"/>
</dbReference>
<dbReference type="Gene3D" id="2.40.30.10">
    <property type="entry name" value="Translation factors"/>
    <property type="match status" value="1"/>
</dbReference>
<dbReference type="InterPro" id="IPR008333">
    <property type="entry name" value="Cbr1-like_FAD-bd_dom"/>
</dbReference>
<dbReference type="InterPro" id="IPR017927">
    <property type="entry name" value="FAD-bd_FR_type"/>
</dbReference>
<dbReference type="InterPro" id="IPR039261">
    <property type="entry name" value="FNR_nucleotide-bd"/>
</dbReference>
<dbReference type="InterPro" id="IPR050415">
    <property type="entry name" value="MRET"/>
</dbReference>
<dbReference type="InterPro" id="IPR001433">
    <property type="entry name" value="OxRdtase_FAD/NAD-bd"/>
</dbReference>
<dbReference type="InterPro" id="IPR017938">
    <property type="entry name" value="Riboflavin_synthase-like_b-brl"/>
</dbReference>
<dbReference type="NCBIfam" id="NF005963">
    <property type="entry name" value="PRK08051.1"/>
    <property type="match status" value="1"/>
</dbReference>
<dbReference type="PANTHER" id="PTHR47354:SF7">
    <property type="entry name" value="NAD(P)H-FLAVIN REDUCTASE"/>
    <property type="match status" value="1"/>
</dbReference>
<dbReference type="PANTHER" id="PTHR47354">
    <property type="entry name" value="NADH OXIDOREDUCTASE HCR"/>
    <property type="match status" value="1"/>
</dbReference>
<dbReference type="Pfam" id="PF00970">
    <property type="entry name" value="FAD_binding_6"/>
    <property type="match status" value="1"/>
</dbReference>
<dbReference type="Pfam" id="PF00175">
    <property type="entry name" value="NAD_binding_1"/>
    <property type="match status" value="1"/>
</dbReference>
<dbReference type="PRINTS" id="PR00410">
    <property type="entry name" value="PHEHYDRXLASE"/>
</dbReference>
<dbReference type="SUPFAM" id="SSF52343">
    <property type="entry name" value="Ferredoxin reductase-like, C-terminal NADP-linked domain"/>
    <property type="match status" value="1"/>
</dbReference>
<dbReference type="SUPFAM" id="SSF63380">
    <property type="entry name" value="Riboflavin synthase domain-like"/>
    <property type="match status" value="1"/>
</dbReference>
<dbReference type="PROSITE" id="PS51384">
    <property type="entry name" value="FAD_FR"/>
    <property type="match status" value="1"/>
</dbReference>
<organism>
    <name type="scientific">Aliivibrio fischeri</name>
    <name type="common">Vibrio fischeri</name>
    <dbReference type="NCBI Taxonomy" id="668"/>
    <lineage>
        <taxon>Bacteria</taxon>
        <taxon>Pseudomonadati</taxon>
        <taxon>Pseudomonadota</taxon>
        <taxon>Gammaproteobacteria</taxon>
        <taxon>Vibrionales</taxon>
        <taxon>Vibrionaceae</taxon>
        <taxon>Aliivibrio</taxon>
    </lineage>
</organism>
<keyword id="KW-0274">FAD</keyword>
<keyword id="KW-0285">Flavoprotein</keyword>
<keyword id="KW-0455">Luminescence</keyword>
<keyword id="KW-0560">Oxidoreductase</keyword>
<reference key="1">
    <citation type="journal article" date="1994" name="J. Bacteriol.">
        <title>Identification of the genes encoding NAD(P)H-flavin oxidoreductases that are similar in sequence to Escherichia coli Fre in four species of luminous bacteria: Photorhabdus luminescens, Vibrio fischeri, Vibrio harveyi, and Vibrio orientalis.</title>
        <authorList>
            <person name="Zenno S."/>
            <person name="Saigo K."/>
        </authorList>
    </citation>
    <scope>NUCLEOTIDE SEQUENCE [GENOMIC DNA]</scope>
    <source>
        <strain>ATCC 7744 / DSM 507 / NCIMB 1281 / 398</strain>
    </source>
</reference>
<protein>
    <recommendedName>
        <fullName>NAD(P)H-flavin reductase</fullName>
        <ecNumber>1.5.1.-</ecNumber>
    </recommendedName>
    <alternativeName>
        <fullName>NAD(P)H:flavin oxidoreductase</fullName>
    </alternativeName>
</protein>
<gene>
    <name type="primary">fre</name>
</gene>
<name>FRE_ALIFS</name>
<comment type="function">
    <text>Involved in bioluminescence. It is a good supplier of reduced flavin mononucleotide (FMNH2) to the bioluminescence reaction. Preferably uses riboflavin as an electron acceptor when NADPH is used as an electron donor.</text>
</comment>
<comment type="similarity">
    <text evidence="3">Belongs to the Fre/LuxG FAD/NAD(P) flavoprotein oxidoreductase family.</text>
</comment>
<sequence>MPINCKVKSIEPLACNTFRILLHPEQPVAFKAGQYLTVVMGEKDKRPFSIASSPCRHEGEIELHIGAAEHNAYAGEVVESMKSALETGGDILIDAPHGEAWIREDSDRSMLLIAGGTGFSYVRSILDHCISQQIQKPIYLYWGGRDECQLYAKAELESIAQAHSHITFVPVVEKSEGWTGKTGNVLEAVKADFNSLADMDIYIAGRFEMAGAAREQFTTEKQAKKEQLFGDAFAFI</sequence>
<feature type="chain" id="PRO_0000068149" description="NAD(P)H-flavin reductase">
    <location>
        <begin position="1"/>
        <end position="236"/>
    </location>
</feature>
<feature type="domain" description="FAD-binding FR-type" evidence="2">
    <location>
        <begin position="1"/>
        <end position="103"/>
    </location>
</feature>
<feature type="binding site" evidence="1">
    <location>
        <begin position="115"/>
        <end position="119"/>
    </location>
    <ligand>
        <name>pyridine</name>
        <dbReference type="ChEBI" id="CHEBI:16227"/>
    </ligand>
</feature>